<protein>
    <recommendedName>
        <fullName evidence="3">Vascular-related unknown protein 3</fullName>
    </recommendedName>
</protein>
<organism>
    <name type="scientific">Arabidopsis thaliana</name>
    <name type="common">Mouse-ear cress</name>
    <dbReference type="NCBI Taxonomy" id="3702"/>
    <lineage>
        <taxon>Eukaryota</taxon>
        <taxon>Viridiplantae</taxon>
        <taxon>Streptophyta</taxon>
        <taxon>Embryophyta</taxon>
        <taxon>Tracheophyta</taxon>
        <taxon>Spermatophyta</taxon>
        <taxon>Magnoliopsida</taxon>
        <taxon>eudicotyledons</taxon>
        <taxon>Gunneridae</taxon>
        <taxon>Pentapetalae</taxon>
        <taxon>rosids</taxon>
        <taxon>malvids</taxon>
        <taxon>Brassicales</taxon>
        <taxon>Brassicaceae</taxon>
        <taxon>Camelineae</taxon>
        <taxon>Arabidopsis</taxon>
    </lineage>
</organism>
<keyword id="KW-0025">Alternative splicing</keyword>
<keyword id="KW-1185">Reference proteome</keyword>
<feature type="chain" id="PRO_0000441923" description="Vascular-related unknown protein 3">
    <location>
        <begin position="1"/>
        <end position="130"/>
    </location>
</feature>
<feature type="region of interest" description="Disordered" evidence="1">
    <location>
        <begin position="45"/>
        <end position="81"/>
    </location>
</feature>
<feature type="splice variant" id="VSP_059136" description="In isoform 2.">
    <original>EKILNKNGIKIEE</original>
    <variation>VRNFMFSNISFHK</variation>
    <location>
        <begin position="95"/>
        <end position="107"/>
    </location>
</feature>
<feature type="splice variant" id="VSP_059137" description="In isoform 2.">
    <location>
        <begin position="108"/>
        <end position="130"/>
    </location>
</feature>
<evidence type="ECO:0000256" key="1">
    <source>
        <dbReference type="SAM" id="MobiDB-lite"/>
    </source>
</evidence>
<evidence type="ECO:0000269" key="2">
    <source>
    </source>
</evidence>
<evidence type="ECO:0000303" key="3">
    <source>
    </source>
</evidence>
<evidence type="ECO:0000312" key="4">
    <source>
        <dbReference type="Araport" id="AT3G20557"/>
    </source>
</evidence>
<accession>Q56YT7</accession>
<accession>B3H6S0</accession>
<name>VUP3_ARATH</name>
<sequence length="130" mass="14575">MENSALSNCVRRTNFSNQQRTMQEGLEESSWTMYFETEDGLGHYDDSSMMSDAASPMGCVEEDTASSPSNRTEGYSGMEDNTIEEKTMNNGKIEEKILNKNGIKIEEYCAELKKRGLCLVPLSMLSNYIG</sequence>
<reference key="1">
    <citation type="journal article" date="2000" name="DNA Res.">
        <title>Structural analysis of Arabidopsis thaliana chromosome 3. II. Sequence features of the 4,251,695 bp regions covered by 90 P1, TAC and BAC clones.</title>
        <authorList>
            <person name="Kaneko T."/>
            <person name="Katoh T."/>
            <person name="Sato S."/>
            <person name="Nakamura Y."/>
            <person name="Asamizu E."/>
            <person name="Tabata S."/>
        </authorList>
    </citation>
    <scope>NUCLEOTIDE SEQUENCE [LARGE SCALE GENOMIC DNA]</scope>
    <source>
        <strain>cv. Columbia</strain>
    </source>
</reference>
<reference key="2">
    <citation type="journal article" date="2017" name="Plant J.">
        <title>Araport11: a complete reannotation of the Arabidopsis thaliana reference genome.</title>
        <authorList>
            <person name="Cheng C.Y."/>
            <person name="Krishnakumar V."/>
            <person name="Chan A.P."/>
            <person name="Thibaud-Nissen F."/>
            <person name="Schobel S."/>
            <person name="Town C.D."/>
        </authorList>
    </citation>
    <scope>GENOME REANNOTATION</scope>
    <source>
        <strain>cv. Columbia</strain>
    </source>
</reference>
<reference key="3">
    <citation type="journal article" date="2006" name="Plant Biotechnol. J.">
        <title>Simultaneous high-throughput recombinational cloning of open reading frames in closed and open configurations.</title>
        <authorList>
            <person name="Underwood B.A."/>
            <person name="Vanderhaeghen R."/>
            <person name="Whitford R."/>
            <person name="Town C.D."/>
            <person name="Hilson P."/>
        </authorList>
    </citation>
    <scope>NUCLEOTIDE SEQUENCE [LARGE SCALE MRNA] (ISOFORM 1)</scope>
    <source>
        <strain>cv. Columbia</strain>
    </source>
</reference>
<reference key="4">
    <citation type="submission" date="2005-03" db="EMBL/GenBank/DDBJ databases">
        <title>Large-scale analysis of RIKEN Arabidopsis full-length (RAFL) cDNAs.</title>
        <authorList>
            <person name="Totoki Y."/>
            <person name="Seki M."/>
            <person name="Ishida J."/>
            <person name="Nakajima M."/>
            <person name="Enju A."/>
            <person name="Kamiya A."/>
            <person name="Narusaka M."/>
            <person name="Shin-i T."/>
            <person name="Nakagawa M."/>
            <person name="Sakamoto N."/>
            <person name="Oishi K."/>
            <person name="Kohara Y."/>
            <person name="Kobayashi M."/>
            <person name="Toyoda A."/>
            <person name="Sakaki Y."/>
            <person name="Sakurai T."/>
            <person name="Iida K."/>
            <person name="Akiyama K."/>
            <person name="Satou M."/>
            <person name="Toyoda T."/>
            <person name="Konagaya A."/>
            <person name="Carninci P."/>
            <person name="Kawai J."/>
            <person name="Hayashizaki Y."/>
            <person name="Shinozaki K."/>
        </authorList>
    </citation>
    <scope>NUCLEOTIDE SEQUENCE [LARGE SCALE MRNA] (ISOFORM 1)</scope>
    <source>
        <strain>cv. Columbia</strain>
    </source>
</reference>
<reference key="5">
    <citation type="journal article" date="2014" name="Plant Physiol.">
        <title>Arabidopsis VASCULAR-RELATED UNKNOWN PROTEIN1 regulates xylem development and growth by a conserved mechanism that modulates hormone signaling.</title>
        <authorList>
            <person name="Grienenberger E."/>
            <person name="Douglas C.J."/>
        </authorList>
    </citation>
    <scope>FUNCTION</scope>
</reference>
<comment type="function">
    <text evidence="2">Involved in the regulation of plant growth.</text>
</comment>
<comment type="alternative products">
    <event type="alternative splicing"/>
    <isoform>
        <id>Q56YT7-1</id>
        <name>1</name>
        <sequence type="displayed"/>
    </isoform>
    <isoform>
        <id>Q56YT7-2</id>
        <name>2</name>
        <sequence type="described" ref="VSP_059136 VSP_059137"/>
    </isoform>
</comment>
<comment type="miscellaneous">
    <text evidence="2">Plants overexpressing VUP3 exhibit severe dwarfism.</text>
</comment>
<proteinExistence type="evidence at transcript level"/>
<dbReference type="EMBL" id="AP000410">
    <property type="status" value="NOT_ANNOTATED_CDS"/>
    <property type="molecule type" value="Genomic_DNA"/>
</dbReference>
<dbReference type="EMBL" id="CP002686">
    <property type="protein sequence ID" value="AEE76396.1"/>
    <property type="molecule type" value="Genomic_DNA"/>
</dbReference>
<dbReference type="EMBL" id="CP002686">
    <property type="protein sequence ID" value="AEE76397.1"/>
    <property type="molecule type" value="Genomic_DNA"/>
</dbReference>
<dbReference type="EMBL" id="DQ487564">
    <property type="protein sequence ID" value="ABF59233.1"/>
    <property type="molecule type" value="mRNA"/>
</dbReference>
<dbReference type="EMBL" id="AK221234">
    <property type="protein sequence ID" value="BAD93837.1"/>
    <property type="molecule type" value="mRNA"/>
</dbReference>
<dbReference type="RefSeq" id="NP_001030732.1">
    <molecule id="Q56YT7-1"/>
    <property type="nucleotide sequence ID" value="NM_001035655.3"/>
</dbReference>
<dbReference type="RefSeq" id="NP_001118667.1">
    <molecule id="Q56YT7-2"/>
    <property type="nucleotide sequence ID" value="NM_001125195.1"/>
</dbReference>
<dbReference type="PaxDb" id="3702-AT3G20557.1"/>
<dbReference type="EnsemblPlants" id="AT3G20557.1">
    <molecule id="Q56YT7-1"/>
    <property type="protein sequence ID" value="AT3G20557.1"/>
    <property type="gene ID" value="AT3G20557"/>
</dbReference>
<dbReference type="EnsemblPlants" id="AT3G20557.2">
    <molecule id="Q56YT7-2"/>
    <property type="protein sequence ID" value="AT3G20557.2"/>
    <property type="gene ID" value="AT3G20557"/>
</dbReference>
<dbReference type="GeneID" id="3768762"/>
<dbReference type="Gramene" id="AT3G20557.1">
    <molecule id="Q56YT7-1"/>
    <property type="protein sequence ID" value="AT3G20557.1"/>
    <property type="gene ID" value="AT3G20557"/>
</dbReference>
<dbReference type="Gramene" id="AT3G20557.2">
    <molecule id="Q56YT7-2"/>
    <property type="protein sequence ID" value="AT3G20557.2"/>
    <property type="gene ID" value="AT3G20557"/>
</dbReference>
<dbReference type="KEGG" id="ath:AT3G20557"/>
<dbReference type="Araport" id="AT3G20557"/>
<dbReference type="TAIR" id="AT3G20557">
    <property type="gene designation" value="VUP3"/>
</dbReference>
<dbReference type="eggNOG" id="KOG2667">
    <property type="taxonomic scope" value="Eukaryota"/>
</dbReference>
<dbReference type="HOGENOM" id="CLU_160247_0_0_1"/>
<dbReference type="InParanoid" id="Q56YT7"/>
<dbReference type="OMA" id="MIEEYCA"/>
<dbReference type="PhylomeDB" id="Q56YT7"/>
<dbReference type="PRO" id="PR:Q56YT7"/>
<dbReference type="Proteomes" id="UP000006548">
    <property type="component" value="Chromosome 3"/>
</dbReference>
<dbReference type="ExpressionAtlas" id="Q56YT7">
    <property type="expression patterns" value="baseline and differential"/>
</dbReference>
<dbReference type="GO" id="GO:0009825">
    <property type="term" value="P:multidimensional cell growth"/>
    <property type="evidence" value="ECO:0000315"/>
    <property type="project" value="UniProtKB"/>
</dbReference>
<dbReference type="GO" id="GO:0010089">
    <property type="term" value="P:xylem development"/>
    <property type="evidence" value="ECO:0007669"/>
    <property type="project" value="InterPro"/>
</dbReference>
<dbReference type="InterPro" id="IPR039280">
    <property type="entry name" value="VUP"/>
</dbReference>
<dbReference type="PANTHER" id="PTHR33974">
    <property type="entry name" value="VASCULAR-RELATED UNKNOWN PROTEIN 1-RELATED"/>
    <property type="match status" value="1"/>
</dbReference>
<dbReference type="PANTHER" id="PTHR33974:SF9">
    <property type="entry name" value="VASCULAR-RELATED UNKNOWN PROTEIN 3"/>
    <property type="match status" value="1"/>
</dbReference>
<gene>
    <name evidence="3" type="primary">VUP3</name>
    <name evidence="4" type="ordered locus">At3g20557</name>
</gene>